<sequence length="534" mass="57889">MSDTTLNVSLASQGYPEPAELFANLGTAPLVEHAVRNGEGLLCVDGPLVVETGKHTGRSAKDKFIVRDAETENTVWWGKTNVAMSPEHFAALKADFIKALGEKDRLYVADLFGGSQPEHRVKVRVINELAWHNLFIRTLLVRPTTDELASFVPEYTIIDLPSFRADPARHGSRSETVIAVNFTEKLILIGGTAYAGEMKKSVFGILNYLLPVKGVMPMHCSANVGPDGKTAVFFGLSGTGKTTLSADASRTLIGDDEHGWSDTAVFNFEGGCYAKMIRLSAEAEPEIFATTKRFGTVLENVVIDPVTRTIDLDDNSLAENSRGSYPIDFIPNASEENLGPVPANLIFLTADAYGVLPPIARLTPDQAMYHFLSGYTARVAGTEIGVTEPEATFSTCFGAPFMPRHPSVYGNLLKERIAKGGVKCWLVNTGWSGGKATQEGIKRMPIKATRALLNAALDGSLNSATFTKDPNFGFEVPVEVPGVDTKLLDPRGAWADGEEYDKTAQELVRKFVDNFQQFADHVDQSVRDAAPVAA</sequence>
<proteinExistence type="inferred from homology"/>
<reference key="1">
    <citation type="submission" date="2006-01" db="EMBL/GenBank/DDBJ databases">
        <title>Complete sequence of Novosphingobium aromaticivorans DSM 12444.</title>
        <authorList>
            <consortium name="US DOE Joint Genome Institute"/>
            <person name="Copeland A."/>
            <person name="Lucas S."/>
            <person name="Lapidus A."/>
            <person name="Barry K."/>
            <person name="Detter J.C."/>
            <person name="Glavina T."/>
            <person name="Hammon N."/>
            <person name="Israni S."/>
            <person name="Pitluck S."/>
            <person name="Chain P."/>
            <person name="Malfatti S."/>
            <person name="Shin M."/>
            <person name="Vergez L."/>
            <person name="Schmutz J."/>
            <person name="Larimer F."/>
            <person name="Land M."/>
            <person name="Kyrpides N."/>
            <person name="Ivanova N."/>
            <person name="Fredrickson J."/>
            <person name="Balkwill D."/>
            <person name="Romine M.F."/>
            <person name="Richardson P."/>
        </authorList>
    </citation>
    <scope>NUCLEOTIDE SEQUENCE [LARGE SCALE GENOMIC DNA]</scope>
    <source>
        <strain>ATCC 700278 / DSM 12444 / CCUG 56034 / CIP 105152 / NBRC 16084 / F199</strain>
    </source>
</reference>
<gene>
    <name evidence="1" type="primary">pckA</name>
    <name type="ordered locus">Saro_2908</name>
</gene>
<evidence type="ECO:0000255" key="1">
    <source>
        <dbReference type="HAMAP-Rule" id="MF_00453"/>
    </source>
</evidence>
<name>PCKA_NOVAD</name>
<accession>Q2G480</accession>
<comment type="function">
    <text evidence="1">Involved in the gluconeogenesis. Catalyzes the conversion of oxaloacetate (OAA) to phosphoenolpyruvate (PEP) through direct phosphoryl transfer between the nucleoside triphosphate and OAA.</text>
</comment>
<comment type="catalytic activity">
    <reaction evidence="1">
        <text>oxaloacetate + ATP = phosphoenolpyruvate + ADP + CO2</text>
        <dbReference type="Rhea" id="RHEA:18617"/>
        <dbReference type="ChEBI" id="CHEBI:16452"/>
        <dbReference type="ChEBI" id="CHEBI:16526"/>
        <dbReference type="ChEBI" id="CHEBI:30616"/>
        <dbReference type="ChEBI" id="CHEBI:58702"/>
        <dbReference type="ChEBI" id="CHEBI:456216"/>
        <dbReference type="EC" id="4.1.1.49"/>
    </reaction>
</comment>
<comment type="cofactor">
    <cofactor evidence="1">
        <name>Mn(2+)</name>
        <dbReference type="ChEBI" id="CHEBI:29035"/>
    </cofactor>
    <text evidence="1">Binds 1 Mn(2+) ion per subunit.</text>
</comment>
<comment type="pathway">
    <text evidence="1">Carbohydrate biosynthesis; gluconeogenesis.</text>
</comment>
<comment type="subcellular location">
    <subcellularLocation>
        <location evidence="1">Cytoplasm</location>
    </subcellularLocation>
</comment>
<comment type="similarity">
    <text evidence="1">Belongs to the phosphoenolpyruvate carboxykinase (ATP) family.</text>
</comment>
<protein>
    <recommendedName>
        <fullName evidence="1">Phosphoenolpyruvate carboxykinase (ATP)</fullName>
        <shortName evidence="1">PCK</shortName>
        <shortName evidence="1">PEP carboxykinase</shortName>
        <shortName evidence="1">PEPCK</shortName>
        <ecNumber evidence="1">4.1.1.49</ecNumber>
    </recommendedName>
</protein>
<organism>
    <name type="scientific">Novosphingobium aromaticivorans (strain ATCC 700278 / DSM 12444 / CCUG 56034 / CIP 105152 / NBRC 16084 / F199)</name>
    <dbReference type="NCBI Taxonomy" id="279238"/>
    <lineage>
        <taxon>Bacteria</taxon>
        <taxon>Pseudomonadati</taxon>
        <taxon>Pseudomonadota</taxon>
        <taxon>Alphaproteobacteria</taxon>
        <taxon>Sphingomonadales</taxon>
        <taxon>Sphingomonadaceae</taxon>
        <taxon>Novosphingobium</taxon>
    </lineage>
</organism>
<dbReference type="EC" id="4.1.1.49" evidence="1"/>
<dbReference type="EMBL" id="CP000248">
    <property type="protein sequence ID" value="ABD27343.1"/>
    <property type="molecule type" value="Genomic_DNA"/>
</dbReference>
<dbReference type="RefSeq" id="WP_011446547.1">
    <property type="nucleotide sequence ID" value="NC_007794.1"/>
</dbReference>
<dbReference type="SMR" id="Q2G480"/>
<dbReference type="STRING" id="279238.Saro_2908"/>
<dbReference type="KEGG" id="nar:Saro_2908"/>
<dbReference type="eggNOG" id="COG1866">
    <property type="taxonomic scope" value="Bacteria"/>
</dbReference>
<dbReference type="HOGENOM" id="CLU_018247_0_1_5"/>
<dbReference type="UniPathway" id="UPA00138"/>
<dbReference type="Proteomes" id="UP000009134">
    <property type="component" value="Chromosome"/>
</dbReference>
<dbReference type="GO" id="GO:0005829">
    <property type="term" value="C:cytosol"/>
    <property type="evidence" value="ECO:0007669"/>
    <property type="project" value="TreeGrafter"/>
</dbReference>
<dbReference type="GO" id="GO:0005524">
    <property type="term" value="F:ATP binding"/>
    <property type="evidence" value="ECO:0007669"/>
    <property type="project" value="UniProtKB-UniRule"/>
</dbReference>
<dbReference type="GO" id="GO:0046872">
    <property type="term" value="F:metal ion binding"/>
    <property type="evidence" value="ECO:0007669"/>
    <property type="project" value="UniProtKB-KW"/>
</dbReference>
<dbReference type="GO" id="GO:0004612">
    <property type="term" value="F:phosphoenolpyruvate carboxykinase (ATP) activity"/>
    <property type="evidence" value="ECO:0007669"/>
    <property type="project" value="UniProtKB-UniRule"/>
</dbReference>
<dbReference type="GO" id="GO:0006094">
    <property type="term" value="P:gluconeogenesis"/>
    <property type="evidence" value="ECO:0007669"/>
    <property type="project" value="UniProtKB-UniRule"/>
</dbReference>
<dbReference type="CDD" id="cd00484">
    <property type="entry name" value="PEPCK_ATP"/>
    <property type="match status" value="1"/>
</dbReference>
<dbReference type="Gene3D" id="3.90.228.20">
    <property type="match status" value="1"/>
</dbReference>
<dbReference type="Gene3D" id="3.40.449.10">
    <property type="entry name" value="Phosphoenolpyruvate Carboxykinase, domain 1"/>
    <property type="match status" value="1"/>
</dbReference>
<dbReference type="Gene3D" id="2.170.8.10">
    <property type="entry name" value="Phosphoenolpyruvate Carboxykinase, domain 2"/>
    <property type="match status" value="1"/>
</dbReference>
<dbReference type="HAMAP" id="MF_00453">
    <property type="entry name" value="PEPCK_ATP"/>
    <property type="match status" value="1"/>
</dbReference>
<dbReference type="InterPro" id="IPR001272">
    <property type="entry name" value="PEP_carboxykinase_ATP"/>
</dbReference>
<dbReference type="InterPro" id="IPR013035">
    <property type="entry name" value="PEP_carboxykinase_C"/>
</dbReference>
<dbReference type="InterPro" id="IPR008210">
    <property type="entry name" value="PEP_carboxykinase_N"/>
</dbReference>
<dbReference type="NCBIfam" id="TIGR00224">
    <property type="entry name" value="pckA"/>
    <property type="match status" value="1"/>
</dbReference>
<dbReference type="NCBIfam" id="NF006820">
    <property type="entry name" value="PRK09344.1-2"/>
    <property type="match status" value="1"/>
</dbReference>
<dbReference type="NCBIfam" id="NF006821">
    <property type="entry name" value="PRK09344.1-3"/>
    <property type="match status" value="1"/>
</dbReference>
<dbReference type="NCBIfam" id="NF006822">
    <property type="entry name" value="PRK09344.1-4"/>
    <property type="match status" value="1"/>
</dbReference>
<dbReference type="PANTHER" id="PTHR30031:SF0">
    <property type="entry name" value="PHOSPHOENOLPYRUVATE CARBOXYKINASE (ATP)"/>
    <property type="match status" value="1"/>
</dbReference>
<dbReference type="PANTHER" id="PTHR30031">
    <property type="entry name" value="PHOSPHOENOLPYRUVATE CARBOXYKINASE ATP"/>
    <property type="match status" value="1"/>
</dbReference>
<dbReference type="Pfam" id="PF01293">
    <property type="entry name" value="PEPCK_ATP"/>
    <property type="match status" value="1"/>
</dbReference>
<dbReference type="PIRSF" id="PIRSF006294">
    <property type="entry name" value="PEP_crbxkin"/>
    <property type="match status" value="1"/>
</dbReference>
<dbReference type="SUPFAM" id="SSF68923">
    <property type="entry name" value="PEP carboxykinase N-terminal domain"/>
    <property type="match status" value="1"/>
</dbReference>
<dbReference type="SUPFAM" id="SSF53795">
    <property type="entry name" value="PEP carboxykinase-like"/>
    <property type="match status" value="1"/>
</dbReference>
<keyword id="KW-0067">ATP-binding</keyword>
<keyword id="KW-0963">Cytoplasm</keyword>
<keyword id="KW-0210">Decarboxylase</keyword>
<keyword id="KW-0312">Gluconeogenesis</keyword>
<keyword id="KW-0456">Lyase</keyword>
<keyword id="KW-0464">Manganese</keyword>
<keyword id="KW-0479">Metal-binding</keyword>
<keyword id="KW-0547">Nucleotide-binding</keyword>
<keyword id="KW-1185">Reference proteome</keyword>
<feature type="chain" id="PRO_0000236931" description="Phosphoenolpyruvate carboxykinase (ATP)">
    <location>
        <begin position="1"/>
        <end position="534"/>
    </location>
</feature>
<feature type="binding site" evidence="1">
    <location>
        <position position="58"/>
    </location>
    <ligand>
        <name>substrate</name>
    </ligand>
</feature>
<feature type="binding site" evidence="1">
    <location>
        <position position="194"/>
    </location>
    <ligand>
        <name>substrate</name>
    </ligand>
</feature>
<feature type="binding site" evidence="1">
    <location>
        <position position="200"/>
    </location>
    <ligand>
        <name>ATP</name>
        <dbReference type="ChEBI" id="CHEBI:30616"/>
    </ligand>
</feature>
<feature type="binding site" evidence="1">
    <location>
        <position position="200"/>
    </location>
    <ligand>
        <name>Mn(2+)</name>
        <dbReference type="ChEBI" id="CHEBI:29035"/>
    </ligand>
</feature>
<feature type="binding site" evidence="1">
    <location>
        <position position="200"/>
    </location>
    <ligand>
        <name>substrate</name>
    </ligand>
</feature>
<feature type="binding site" evidence="1">
    <location>
        <position position="219"/>
    </location>
    <ligand>
        <name>ATP</name>
        <dbReference type="ChEBI" id="CHEBI:30616"/>
    </ligand>
</feature>
<feature type="binding site" evidence="1">
    <location>
        <position position="219"/>
    </location>
    <ligand>
        <name>Mn(2+)</name>
        <dbReference type="ChEBI" id="CHEBI:29035"/>
    </ligand>
</feature>
<feature type="binding site" evidence="1">
    <location>
        <begin position="235"/>
        <end position="243"/>
    </location>
    <ligand>
        <name>ATP</name>
        <dbReference type="ChEBI" id="CHEBI:30616"/>
    </ligand>
</feature>
<feature type="binding site" evidence="1">
    <location>
        <position position="256"/>
    </location>
    <ligand>
        <name>Mn(2+)</name>
        <dbReference type="ChEBI" id="CHEBI:29035"/>
    </ligand>
</feature>
<feature type="binding site" evidence="1">
    <location>
        <position position="284"/>
    </location>
    <ligand>
        <name>ATP</name>
        <dbReference type="ChEBI" id="CHEBI:30616"/>
    </ligand>
</feature>
<feature type="binding site" evidence="1">
    <location>
        <position position="322"/>
    </location>
    <ligand>
        <name>ATP</name>
        <dbReference type="ChEBI" id="CHEBI:30616"/>
    </ligand>
</feature>
<feature type="binding site" evidence="1">
    <location>
        <position position="322"/>
    </location>
    <ligand>
        <name>substrate</name>
    </ligand>
</feature>
<feature type="binding site" evidence="1">
    <location>
        <position position="449"/>
    </location>
    <ligand>
        <name>ATP</name>
        <dbReference type="ChEBI" id="CHEBI:30616"/>
    </ligand>
</feature>